<protein>
    <recommendedName>
        <fullName>Toxin Acra2</fullName>
    </recommendedName>
</protein>
<reference key="1">
    <citation type="journal article" date="2006" name="Toxicon">
        <title>Characterization of venom components from the scorpion Androctonus crassicauda of Turkey: peptides and genes.</title>
        <authorList>
            <person name="Caliskan F."/>
            <person name="Garcia B.I."/>
            <person name="Coronas F.I.V."/>
            <person name="Batista C.V.F."/>
            <person name="Zamudio F.Z."/>
            <person name="Possani L.D."/>
        </authorList>
    </citation>
    <scope>PROTEIN SEQUENCE</scope>
    <scope>SUBCELLULAR LOCATION</scope>
    <scope>MASS SPECTROMETRY</scope>
    <source>
        <tissue>Venom</tissue>
    </source>
</reference>
<organism>
    <name type="scientific">Androctonus crassicauda</name>
    <name type="common">Arabian fat-tailed scorpion</name>
    <dbReference type="NCBI Taxonomy" id="122909"/>
    <lineage>
        <taxon>Eukaryota</taxon>
        <taxon>Metazoa</taxon>
        <taxon>Ecdysozoa</taxon>
        <taxon>Arthropoda</taxon>
        <taxon>Chelicerata</taxon>
        <taxon>Arachnida</taxon>
        <taxon>Scorpiones</taxon>
        <taxon>Buthida</taxon>
        <taxon>Buthoidea</taxon>
        <taxon>Buthidae</taxon>
        <taxon>Androctonus</taxon>
    </lineage>
</organism>
<accession>P0C2A0</accession>
<keyword id="KW-0903">Direct protein sequencing</keyword>
<keyword id="KW-1015">Disulfide bond</keyword>
<keyword id="KW-0872">Ion channel impairing toxin</keyword>
<keyword id="KW-0528">Neurotoxin</keyword>
<keyword id="KW-0964">Secreted</keyword>
<keyword id="KW-0800">Toxin</keyword>
<keyword id="KW-0738">Voltage-gated sodium channel impairing toxin</keyword>
<comment type="function">
    <text evidence="1">Excitatory insect toxins induce a spastic paralysis. They bind voltage-independently at site-4 of sodium channels (Nav) and shift the voltage of activation toward more negative potentials thereby affecting sodium channel activation and promoting spontaneous and repetitive firing (By similarity). Is lethal to mice. Is about 1% of the total protein in the venom.</text>
</comment>
<comment type="subcellular location">
    <subcellularLocation>
        <location evidence="3">Secreted</location>
    </subcellularLocation>
</comment>
<comment type="tissue specificity">
    <text evidence="4">Expressed by the venom gland.</text>
</comment>
<comment type="domain">
    <text evidence="4">Has the structural arrangement of an alpha-helix connected to antiparallel beta-sheets by disulfide bonds (CS-alpha/beta).</text>
</comment>
<comment type="PTM">
    <text evidence="1">Contains 4 disulfide bonds.</text>
</comment>
<comment type="mass spectrometry" mass="7848.6" method="Electrospray" evidence="3"/>
<comment type="similarity">
    <text evidence="4">Belongs to the long (4 C-C) scorpion toxin superfamily. Sodium channel inhibitor family. Beta subfamily.</text>
</comment>
<dbReference type="GO" id="GO:0005576">
    <property type="term" value="C:extracellular region"/>
    <property type="evidence" value="ECO:0007669"/>
    <property type="project" value="UniProtKB-SubCell"/>
</dbReference>
<dbReference type="GO" id="GO:0019871">
    <property type="term" value="F:sodium channel inhibitor activity"/>
    <property type="evidence" value="ECO:0007669"/>
    <property type="project" value="InterPro"/>
</dbReference>
<dbReference type="GO" id="GO:0090729">
    <property type="term" value="F:toxin activity"/>
    <property type="evidence" value="ECO:0007669"/>
    <property type="project" value="UniProtKB-KW"/>
</dbReference>
<dbReference type="Gene3D" id="3.30.30.10">
    <property type="entry name" value="Knottin, scorpion toxin-like"/>
    <property type="match status" value="1"/>
</dbReference>
<dbReference type="InterPro" id="IPR044062">
    <property type="entry name" value="LCN-type_CS_alpha_beta_dom"/>
</dbReference>
<dbReference type="InterPro" id="IPR036574">
    <property type="entry name" value="Scorpion_toxin-like_sf"/>
</dbReference>
<dbReference type="InterPro" id="IPR002061">
    <property type="entry name" value="Scorpion_toxinL/defensin"/>
</dbReference>
<dbReference type="Pfam" id="PF00537">
    <property type="entry name" value="Toxin_3"/>
    <property type="match status" value="1"/>
</dbReference>
<dbReference type="SUPFAM" id="SSF57095">
    <property type="entry name" value="Scorpion toxin-like"/>
    <property type="match status" value="1"/>
</dbReference>
<dbReference type="PROSITE" id="PS51863">
    <property type="entry name" value="LCN_CSAB"/>
    <property type="match status" value="1"/>
</dbReference>
<evidence type="ECO:0000250" key="1"/>
<evidence type="ECO:0000255" key="2">
    <source>
        <dbReference type="PROSITE-ProRule" id="PRU01210"/>
    </source>
</evidence>
<evidence type="ECO:0000269" key="3">
    <source>
    </source>
</evidence>
<evidence type="ECO:0000305" key="4"/>
<name>TX20_ANDCR</name>
<sequence length="23" mass="2430">KKDGYIVDSNGCAPECFPTNXGC</sequence>
<proteinExistence type="evidence at protein level"/>
<feature type="chain" id="PRO_0000271327" description="Toxin Acra2">
    <location>
        <begin position="1"/>
        <end position="23" status="greater than"/>
    </location>
</feature>
<feature type="domain" description="LCN-type CS-alpha/beta" evidence="2">
    <location>
        <begin position="2"/>
        <end position="23" status="greater than"/>
    </location>
</feature>
<feature type="non-terminal residue">
    <location>
        <position position="23"/>
    </location>
</feature>